<proteinExistence type="evidence at transcript level"/>
<feature type="chain" id="PRO_0000064274" description="Catenin beta">
    <location>
        <begin position="1"/>
        <end position="820"/>
    </location>
</feature>
<feature type="repeat" description="ARM 1">
    <location>
        <begin position="157"/>
        <end position="196"/>
    </location>
</feature>
<feature type="repeat" description="ARM 2">
    <location>
        <begin position="199"/>
        <end position="239"/>
    </location>
</feature>
<feature type="repeat" description="ARM 3">
    <location>
        <begin position="241"/>
        <end position="280"/>
    </location>
</feature>
<feature type="repeat" description="ARM 4">
    <location>
        <begin position="283"/>
        <end position="322"/>
    </location>
</feature>
<feature type="repeat" description="ARM 5">
    <location>
        <begin position="367"/>
        <end position="405"/>
    </location>
</feature>
<feature type="repeat" description="ARM 6">
    <location>
        <begin position="406"/>
        <end position="445"/>
    </location>
</feature>
<feature type="repeat" description="ARM 7">
    <location>
        <begin position="448"/>
        <end position="489"/>
    </location>
</feature>
<feature type="repeat" description="ARM 8">
    <location>
        <begin position="495"/>
        <end position="535"/>
    </location>
</feature>
<feature type="repeat" description="ARM 9">
    <location>
        <begin position="603"/>
        <end position="642"/>
    </location>
</feature>
<feature type="repeat" description="ARM 10">
    <location>
        <begin position="644"/>
        <end position="683"/>
    </location>
</feature>
<feature type="region of interest" description="Disordered" evidence="2">
    <location>
        <begin position="1"/>
        <end position="74"/>
    </location>
</feature>
<feature type="region of interest" description="Disordered" evidence="2">
    <location>
        <begin position="708"/>
        <end position="811"/>
    </location>
</feature>
<feature type="compositionally biased region" description="Polar residues" evidence="2">
    <location>
        <begin position="1"/>
        <end position="16"/>
    </location>
</feature>
<feature type="compositionally biased region" description="Low complexity" evidence="2">
    <location>
        <begin position="52"/>
        <end position="63"/>
    </location>
</feature>
<feature type="compositionally biased region" description="Low complexity" evidence="2">
    <location>
        <begin position="785"/>
        <end position="796"/>
    </location>
</feature>
<name>CTNB_TRIGR</name>
<dbReference type="EMBL" id="L10354">
    <property type="protein sequence ID" value="AAA30089.1"/>
    <property type="molecule type" value="mRNA"/>
</dbReference>
<dbReference type="PIR" id="S33794">
    <property type="entry name" value="S33794"/>
</dbReference>
<dbReference type="SMR" id="P35223"/>
<dbReference type="GO" id="GO:0005737">
    <property type="term" value="C:cytoplasm"/>
    <property type="evidence" value="ECO:0007669"/>
    <property type="project" value="UniProtKB-SubCell"/>
</dbReference>
<dbReference type="GO" id="GO:0005856">
    <property type="term" value="C:cytoskeleton"/>
    <property type="evidence" value="ECO:0007669"/>
    <property type="project" value="UniProtKB-SubCell"/>
</dbReference>
<dbReference type="GO" id="GO:0045296">
    <property type="term" value="F:cadherin binding"/>
    <property type="evidence" value="ECO:0007669"/>
    <property type="project" value="InterPro"/>
</dbReference>
<dbReference type="GO" id="GO:0007155">
    <property type="term" value="P:cell adhesion"/>
    <property type="evidence" value="ECO:0007669"/>
    <property type="project" value="UniProtKB-KW"/>
</dbReference>
<dbReference type="CDD" id="cd21726">
    <property type="entry name" value="CTNNAbd_dArm"/>
    <property type="match status" value="1"/>
</dbReference>
<dbReference type="FunFam" id="1.25.10.10:FF:000015">
    <property type="entry name" value="Catenin beta-1"/>
    <property type="match status" value="1"/>
</dbReference>
<dbReference type="Gene3D" id="1.25.10.10">
    <property type="entry name" value="Leucine-rich Repeat Variant"/>
    <property type="match status" value="1"/>
</dbReference>
<dbReference type="InterPro" id="IPR011989">
    <property type="entry name" value="ARM-like"/>
</dbReference>
<dbReference type="InterPro" id="IPR016024">
    <property type="entry name" value="ARM-type_fold"/>
</dbReference>
<dbReference type="InterPro" id="IPR000225">
    <property type="entry name" value="Armadillo"/>
</dbReference>
<dbReference type="InterPro" id="IPR013284">
    <property type="entry name" value="Beta-catenin"/>
</dbReference>
<dbReference type="PANTHER" id="PTHR45976">
    <property type="entry name" value="ARMADILLO SEGMENT POLARITY PROTEIN"/>
    <property type="match status" value="1"/>
</dbReference>
<dbReference type="Pfam" id="PF00514">
    <property type="entry name" value="Arm"/>
    <property type="match status" value="3"/>
</dbReference>
<dbReference type="PRINTS" id="PR01869">
    <property type="entry name" value="BCATNINFAMLY"/>
</dbReference>
<dbReference type="SMART" id="SM00185">
    <property type="entry name" value="ARM"/>
    <property type="match status" value="12"/>
</dbReference>
<dbReference type="SUPFAM" id="SSF48371">
    <property type="entry name" value="ARM repeat"/>
    <property type="match status" value="1"/>
</dbReference>
<dbReference type="PROSITE" id="PS50176">
    <property type="entry name" value="ARM_REPEAT"/>
    <property type="match status" value="9"/>
</dbReference>
<organism>
    <name type="scientific">Tripneustes gratilla</name>
    <name type="common">Hawaian sea urchin</name>
    <name type="synonym">Echinus gratilla</name>
    <dbReference type="NCBI Taxonomy" id="7673"/>
    <lineage>
        <taxon>Eukaryota</taxon>
        <taxon>Metazoa</taxon>
        <taxon>Echinodermata</taxon>
        <taxon>Eleutherozoa</taxon>
        <taxon>Echinozoa</taxon>
        <taxon>Echinoidea</taxon>
        <taxon>Euechinoidea</taxon>
        <taxon>Echinacea</taxon>
        <taxon>Temnopleuroida</taxon>
        <taxon>Toxopneustidae</taxon>
        <taxon>Tripneustes</taxon>
    </lineage>
</organism>
<keyword id="KW-0130">Cell adhesion</keyword>
<keyword id="KW-0963">Cytoplasm</keyword>
<keyword id="KW-0206">Cytoskeleton</keyword>
<keyword id="KW-0677">Repeat</keyword>
<protein>
    <recommendedName>
        <fullName>Catenin beta</fullName>
    </recommendedName>
    <alternativeName>
        <fullName>Beta-catenin</fullName>
    </alternativeName>
</protein>
<evidence type="ECO:0000250" key="1"/>
<evidence type="ECO:0000256" key="2">
    <source>
        <dbReference type="SAM" id="MobiDB-lite"/>
    </source>
</evidence>
<evidence type="ECO:0000305" key="3"/>
<reference key="1">
    <citation type="journal article" date="1993" name="Biochim. Biophys. Acta">
        <title>Identification of homologues to beta-catenin/plakoglobin/armadillo in two invertebrates, Urechis caupo and Tripneustes gratilla.</title>
        <authorList>
            <person name="Rosenthal E.T."/>
        </authorList>
    </citation>
    <scope>NUCLEOTIDE SEQUENCE [MRNA]</scope>
</reference>
<accession>P35223</accession>
<sequence>MEQARYSNQQSVNPQQKGFGGPGLQDLPKQDPMQNTMEWQHHGYGMDSGFQSSATSHPPSVSSKSRHEDGGEEAQAQGMFEWDAGYGQAYTQEQVDEMNQQLTQTRSQRVRAAMFPETLEEGVQIPSTQFDPAHPTAVQRLSEPSQMLKHAVVNLINYQDDADLATRAIPELTKLLNDDDLVVVNQAAMMVHQLSKKEASRHAIMNSPQMVAALVRAMSNSNDAETTRCAAGTLHNLSHHRAGLLQIFKSGGIPALIKLLSSPVESVLFYAITTLHNLLLHQEGSKMAVRLAGGLQKMVALLSRNNPKFLAITTDCLQILAYGNQESKLIILASGGPAALVHIMRTYDYEKLLWTTSRVLKVLSVCHNNKPAIVEAGGMSALGLHLGHHSNRLVQNCLWTLRNLSDCHRGTDDIEPLLQMLVQLLASNDINVVTCACGILSNLTCNNSRNKMIVSQMAGVEALVQTLMKAGDREEITEPAVCALRHVTSRHPGAEMGQNTVRLNYGIPVIVKLLHPPSRWPLIKATVGLIRNLALCSANHAPLREQGALHRLVQLLMRAHQDTQRRSSMGSTGSQGGNYADGVRMEDIVEGTTGALHILARDSHNRALIQGLNCIPLFVQLLYNNIENIQRVAAGVLSELSLEKQGAEMIEQEGATAPLTELLHSRNEGVATYAAAVLYRMSDDKPQDYKKRISVELGNSLFRGDSVPWGDPLDMPSDNQILPPSSMGGHPPDPGYPQPGSVHSLHSNHGEYRQPPPPMQGYHDGTGPIEPMMQDLDLGGGGDFGMDPGLPDMGPPASDLNLDSIPPADNTGLAFFDTDL</sequence>
<comment type="function">
    <text>Binds to the cytoplasmic domain of the cell-cell adhesion molecule E-cadherin, and perhaps to other (membrane) proteins. The association of catenins to cadherins produces a complex which is linked to the actin filament network, and which seems to be of primary importance for cadherins cell-adhesion properties.</text>
</comment>
<comment type="subcellular location">
    <subcellularLocation>
        <location evidence="1">Cytoplasm</location>
    </subcellularLocation>
    <subcellularLocation>
        <location evidence="1">Cytoplasm</location>
        <location evidence="1">Cytoskeleton</location>
    </subcellularLocation>
</comment>
<comment type="similarity">
    <text evidence="3">Belongs to the beta-catenin family.</text>
</comment>